<reference key="1">
    <citation type="journal article" date="2000" name="DNA Res.">
        <title>Complete genome structure of the nitrogen-fixing symbiotic bacterium Mesorhizobium loti.</title>
        <authorList>
            <person name="Kaneko T."/>
            <person name="Nakamura Y."/>
            <person name="Sato S."/>
            <person name="Asamizu E."/>
            <person name="Kato T."/>
            <person name="Sasamoto S."/>
            <person name="Watanabe A."/>
            <person name="Idesawa K."/>
            <person name="Ishikawa A."/>
            <person name="Kawashima K."/>
            <person name="Kimura T."/>
            <person name="Kishida Y."/>
            <person name="Kiyokawa C."/>
            <person name="Kohara M."/>
            <person name="Matsumoto M."/>
            <person name="Matsuno A."/>
            <person name="Mochizuki Y."/>
            <person name="Nakayama S."/>
            <person name="Nakazaki N."/>
            <person name="Shimpo S."/>
            <person name="Sugimoto M."/>
            <person name="Takeuchi C."/>
            <person name="Yamada M."/>
            <person name="Tabata S."/>
        </authorList>
    </citation>
    <scope>NUCLEOTIDE SEQUENCE [LARGE SCALE GENOMIC DNA]</scope>
    <source>
        <strain>LMG 29417 / CECT 9101 / MAFF 303099</strain>
    </source>
</reference>
<keyword id="KW-0963">Cytoplasm</keyword>
<keyword id="KW-0521">NADP</keyword>
<keyword id="KW-0560">Oxidoreductase</keyword>
<keyword id="KW-0566">Pantothenate biosynthesis</keyword>
<protein>
    <recommendedName>
        <fullName evidence="1">2-dehydropantoate 2-reductase</fullName>
        <ecNumber evidence="1">1.1.1.169</ecNumber>
    </recommendedName>
    <alternativeName>
        <fullName evidence="1">Ketopantoate reductase</fullName>
        <shortName evidence="1">KPR</shortName>
    </alternativeName>
</protein>
<sequence>MKITIFGAGAIGGYLAAKLAIAGRTDLSIVARGAHLEAIQANGLRLIEDGEESMAPVRAAAKAEELGAQDYVVLALKAHSLTPALDQIAPLLGDHTSVVTMQNGVPWWYFHGVGGPLEGTRLNAVDPGGAIWQRIGPQRVIGSVVYPAVEVDAPGLIRHVEGKRFSLGEPSGERSERVTLLAEEMVKAGLQAPVRDDIRSEIWVKLWGNLSFNPISALTGSTLAAIVADEGTRALARTMMLEAQAIGESLGVRFPIGVDRRIKGAGDVGEHKTSMLQDLERGRPMEIDALVSAVQELGRLVDKPTPTIDAVLALVRRLAVERGCYS</sequence>
<organism>
    <name type="scientific">Mesorhizobium japonicum (strain LMG 29417 / CECT 9101 / MAFF 303099)</name>
    <name type="common">Mesorhizobium loti (strain MAFF 303099)</name>
    <dbReference type="NCBI Taxonomy" id="266835"/>
    <lineage>
        <taxon>Bacteria</taxon>
        <taxon>Pseudomonadati</taxon>
        <taxon>Pseudomonadota</taxon>
        <taxon>Alphaproteobacteria</taxon>
        <taxon>Hyphomicrobiales</taxon>
        <taxon>Phyllobacteriaceae</taxon>
        <taxon>Mesorhizobium</taxon>
    </lineage>
</organism>
<accession>Q987N5</accession>
<evidence type="ECO:0000250" key="1">
    <source>
        <dbReference type="UniProtKB" id="P0A9J4"/>
    </source>
</evidence>
<evidence type="ECO:0000305" key="2"/>
<feature type="chain" id="PRO_0000157317" description="2-dehydropantoate 2-reductase">
    <location>
        <begin position="1"/>
        <end position="326"/>
    </location>
</feature>
<feature type="active site" description="Proton donor" evidence="1">
    <location>
        <position position="205"/>
    </location>
</feature>
<feature type="binding site" evidence="1">
    <location>
        <begin position="7"/>
        <end position="12"/>
    </location>
    <ligand>
        <name>NADP(+)</name>
        <dbReference type="ChEBI" id="CHEBI:58349"/>
    </ligand>
</feature>
<feature type="binding site" evidence="1">
    <location>
        <position position="103"/>
    </location>
    <ligand>
        <name>NADP(+)</name>
        <dbReference type="ChEBI" id="CHEBI:58349"/>
    </ligand>
</feature>
<feature type="binding site" evidence="1">
    <location>
        <position position="103"/>
    </location>
    <ligand>
        <name>substrate</name>
    </ligand>
</feature>
<feature type="binding site" evidence="1">
    <location>
        <position position="209"/>
    </location>
    <ligand>
        <name>substrate</name>
    </ligand>
</feature>
<feature type="binding site" evidence="1">
    <location>
        <position position="213"/>
    </location>
    <ligand>
        <name>substrate</name>
    </ligand>
</feature>
<feature type="binding site" evidence="1">
    <location>
        <position position="274"/>
    </location>
    <ligand>
        <name>substrate</name>
    </ligand>
</feature>
<feature type="binding site" evidence="1">
    <location>
        <position position="286"/>
    </location>
    <ligand>
        <name>NADP(+)</name>
        <dbReference type="ChEBI" id="CHEBI:58349"/>
    </ligand>
</feature>
<gene>
    <name type="ordered locus">mll6982</name>
</gene>
<comment type="function">
    <text evidence="1">Catalyzes the NADPH-dependent reduction of ketopantoate into pantoic acid.</text>
</comment>
<comment type="catalytic activity">
    <reaction evidence="1">
        <text>(R)-pantoate + NADP(+) = 2-dehydropantoate + NADPH + H(+)</text>
        <dbReference type="Rhea" id="RHEA:16233"/>
        <dbReference type="ChEBI" id="CHEBI:11561"/>
        <dbReference type="ChEBI" id="CHEBI:15378"/>
        <dbReference type="ChEBI" id="CHEBI:15980"/>
        <dbReference type="ChEBI" id="CHEBI:57783"/>
        <dbReference type="ChEBI" id="CHEBI:58349"/>
        <dbReference type="EC" id="1.1.1.169"/>
    </reaction>
</comment>
<comment type="pathway">
    <text evidence="1">Cofactor biosynthesis; (R)-pantothenate biosynthesis; (R)-pantoate from 3-methyl-2-oxobutanoate: step 2/2.</text>
</comment>
<comment type="subcellular location">
    <subcellularLocation>
        <location evidence="1">Cytoplasm</location>
    </subcellularLocation>
</comment>
<comment type="similarity">
    <text evidence="2">Belongs to the ketopantoate reductase family.</text>
</comment>
<name>PANE_RHILO</name>
<proteinExistence type="inferred from homology"/>
<dbReference type="EC" id="1.1.1.169" evidence="1"/>
<dbReference type="EMBL" id="BA000012">
    <property type="protein sequence ID" value="BAB53168.1"/>
    <property type="molecule type" value="Genomic_DNA"/>
</dbReference>
<dbReference type="RefSeq" id="WP_010914475.1">
    <property type="nucleotide sequence ID" value="NC_002678.2"/>
</dbReference>
<dbReference type="SMR" id="Q987N5"/>
<dbReference type="KEGG" id="mlo:mll6982"/>
<dbReference type="PATRIC" id="fig|266835.9.peg.5562"/>
<dbReference type="eggNOG" id="COG1893">
    <property type="taxonomic scope" value="Bacteria"/>
</dbReference>
<dbReference type="HOGENOM" id="CLU_031468_6_1_5"/>
<dbReference type="UniPathway" id="UPA00028">
    <property type="reaction ID" value="UER00004"/>
</dbReference>
<dbReference type="Proteomes" id="UP000000552">
    <property type="component" value="Chromosome"/>
</dbReference>
<dbReference type="GO" id="GO:0005737">
    <property type="term" value="C:cytoplasm"/>
    <property type="evidence" value="ECO:0007669"/>
    <property type="project" value="UniProtKB-SubCell"/>
</dbReference>
<dbReference type="GO" id="GO:0008677">
    <property type="term" value="F:2-dehydropantoate 2-reductase activity"/>
    <property type="evidence" value="ECO:0007669"/>
    <property type="project" value="UniProtKB-EC"/>
</dbReference>
<dbReference type="GO" id="GO:0015940">
    <property type="term" value="P:pantothenate biosynthetic process"/>
    <property type="evidence" value="ECO:0007669"/>
    <property type="project" value="UniProtKB-UniPathway"/>
</dbReference>
<dbReference type="FunFam" id="1.10.1040.10:FF:000017">
    <property type="entry name" value="2-dehydropantoate 2-reductase"/>
    <property type="match status" value="1"/>
</dbReference>
<dbReference type="FunFam" id="3.40.50.720:FF:000307">
    <property type="entry name" value="2-dehydropantoate 2-reductase"/>
    <property type="match status" value="1"/>
</dbReference>
<dbReference type="Gene3D" id="1.10.1040.10">
    <property type="entry name" value="N-(1-d-carboxylethyl)-l-norvaline Dehydrogenase, domain 2"/>
    <property type="match status" value="1"/>
</dbReference>
<dbReference type="Gene3D" id="3.40.50.720">
    <property type="entry name" value="NAD(P)-binding Rossmann-like Domain"/>
    <property type="match status" value="1"/>
</dbReference>
<dbReference type="InterPro" id="IPR008927">
    <property type="entry name" value="6-PGluconate_DH-like_C_sf"/>
</dbReference>
<dbReference type="InterPro" id="IPR013328">
    <property type="entry name" value="6PGD_dom2"/>
</dbReference>
<dbReference type="InterPro" id="IPR013752">
    <property type="entry name" value="KPA_reductase"/>
</dbReference>
<dbReference type="InterPro" id="IPR051402">
    <property type="entry name" value="KPR-Related"/>
</dbReference>
<dbReference type="InterPro" id="IPR013332">
    <property type="entry name" value="KPR_N"/>
</dbReference>
<dbReference type="InterPro" id="IPR036291">
    <property type="entry name" value="NAD(P)-bd_dom_sf"/>
</dbReference>
<dbReference type="NCBIfam" id="NF005089">
    <property type="entry name" value="PRK06522.1-4"/>
    <property type="match status" value="1"/>
</dbReference>
<dbReference type="PANTHER" id="PTHR21708:SF45">
    <property type="entry name" value="2-DEHYDROPANTOATE 2-REDUCTASE"/>
    <property type="match status" value="1"/>
</dbReference>
<dbReference type="PANTHER" id="PTHR21708">
    <property type="entry name" value="PROBABLE 2-DEHYDROPANTOATE 2-REDUCTASE"/>
    <property type="match status" value="1"/>
</dbReference>
<dbReference type="Pfam" id="PF02558">
    <property type="entry name" value="ApbA"/>
    <property type="match status" value="1"/>
</dbReference>
<dbReference type="Pfam" id="PF08546">
    <property type="entry name" value="ApbA_C"/>
    <property type="match status" value="1"/>
</dbReference>
<dbReference type="SUPFAM" id="SSF48179">
    <property type="entry name" value="6-phosphogluconate dehydrogenase C-terminal domain-like"/>
    <property type="match status" value="1"/>
</dbReference>
<dbReference type="SUPFAM" id="SSF51735">
    <property type="entry name" value="NAD(P)-binding Rossmann-fold domains"/>
    <property type="match status" value="1"/>
</dbReference>